<proteinExistence type="evidence at transcript level"/>
<gene>
    <name type="primary">aasdhppt</name>
</gene>
<name>ADPPT_XENLA</name>
<accession>Q6DJH2</accession>
<comment type="function">
    <text evidence="1">Catalyzes the post-translational modification of target proteins by phosphopantetheine. Can transfer the 4'-phosphopantetheine moiety from coenzyme A, regardless of whether the CoA is presented in the free thiol form or as an acetyl thioester, to a serine residue of a broad range of acceptors.</text>
</comment>
<comment type="catalytic activity">
    <reaction evidence="1">
        <text>apo-[ACP] + CoA = holo-[ACP] + adenosine 3',5'-bisphosphate + H(+)</text>
        <dbReference type="Rhea" id="RHEA:12068"/>
        <dbReference type="Rhea" id="RHEA-COMP:9685"/>
        <dbReference type="Rhea" id="RHEA-COMP:9690"/>
        <dbReference type="ChEBI" id="CHEBI:15378"/>
        <dbReference type="ChEBI" id="CHEBI:29999"/>
        <dbReference type="ChEBI" id="CHEBI:57287"/>
        <dbReference type="ChEBI" id="CHEBI:58343"/>
        <dbReference type="ChEBI" id="CHEBI:64479"/>
        <dbReference type="EC" id="2.7.8.7"/>
    </reaction>
    <physiologicalReaction direction="left-to-right" evidence="1">
        <dbReference type="Rhea" id="RHEA:12069"/>
    </physiologicalReaction>
</comment>
<comment type="catalytic activity">
    <reaction evidence="1">
        <text>apo-[ACP] + acetyl-CoA = acetyl-[ACP] + adenosine 3',5'-bisphosphate + H(+)</text>
        <dbReference type="Rhea" id="RHEA:46564"/>
        <dbReference type="Rhea" id="RHEA-COMP:9621"/>
        <dbReference type="Rhea" id="RHEA-COMP:9690"/>
        <dbReference type="ChEBI" id="CHEBI:15378"/>
        <dbReference type="ChEBI" id="CHEBI:29999"/>
        <dbReference type="ChEBI" id="CHEBI:57288"/>
        <dbReference type="ChEBI" id="CHEBI:58343"/>
        <dbReference type="ChEBI" id="CHEBI:78446"/>
    </reaction>
    <physiologicalReaction direction="left-to-right" evidence="1">
        <dbReference type="Rhea" id="RHEA:46565"/>
    </physiologicalReaction>
</comment>
<comment type="cofactor">
    <cofactor evidence="1">
        <name>Mg(2+)</name>
        <dbReference type="ChEBI" id="CHEBI:18420"/>
    </cofactor>
    <text evidence="1">Binds 1 Mg(2+) ion.</text>
</comment>
<comment type="subunit">
    <text evidence="1">Monomer.</text>
</comment>
<comment type="subcellular location">
    <subcellularLocation>
        <location evidence="1">Cytoplasm</location>
        <location evidence="1">Cytosol</location>
    </subcellularLocation>
</comment>
<comment type="similarity">
    <text evidence="2">Belongs to the P-Pant transferase superfamily. AcpS family.</text>
</comment>
<sequence length="302" mass="35035">MKLSALKRCVMGSVRWAFQCGSWCPSQAEWLLCARCVQPEEKQRIGHFMFTRDAKAAMAGRLLMRKVIADKLQIPWDRILLERTGKGKPFLTGGSSSEYPCFNFNVSHQGDYAVLAAEPDRQVGVDIMKTDLPGSSSIEEFFRLMNRQFTEKEWNSIRSMNNDWARLDMFYRHWALKESFIKAIGVGLGFNLQRIEFEVSPVTMEIGKIYKETKMFLDDEEETWTFEEILLDNQHHVAIALGEVDHLQHQSPKIGDVAESTFTLLNFEDLMVSAIPMSDEDPDYWINFQSKQELPFRQRRSR</sequence>
<dbReference type="EC" id="2.7.8.7" evidence="1"/>
<dbReference type="EMBL" id="BC075207">
    <property type="protein sequence ID" value="AAH75207.1"/>
    <property type="molecule type" value="mRNA"/>
</dbReference>
<dbReference type="RefSeq" id="NP_001086383.1">
    <property type="nucleotide sequence ID" value="NM_001092914.1"/>
</dbReference>
<dbReference type="SMR" id="Q6DJH2"/>
<dbReference type="DNASU" id="444812"/>
<dbReference type="GeneID" id="444812"/>
<dbReference type="KEGG" id="xla:444812"/>
<dbReference type="AGR" id="Xenbase:XB-GENE-985888"/>
<dbReference type="CTD" id="444812"/>
<dbReference type="Xenbase" id="XB-GENE-985888">
    <property type="gene designation" value="aasdhppt.S"/>
</dbReference>
<dbReference type="OrthoDB" id="26719at2759"/>
<dbReference type="Proteomes" id="UP000186698">
    <property type="component" value="Chromosome 2S"/>
</dbReference>
<dbReference type="Bgee" id="444812">
    <property type="expression patterns" value="Expressed in testis and 20 other cell types or tissues"/>
</dbReference>
<dbReference type="GO" id="GO:0005829">
    <property type="term" value="C:cytosol"/>
    <property type="evidence" value="ECO:0000250"/>
    <property type="project" value="UniProtKB"/>
</dbReference>
<dbReference type="GO" id="GO:0008897">
    <property type="term" value="F:holo-[acyl-carrier-protein] synthase activity"/>
    <property type="evidence" value="ECO:0000250"/>
    <property type="project" value="UniProtKB"/>
</dbReference>
<dbReference type="GO" id="GO:0000287">
    <property type="term" value="F:magnesium ion binding"/>
    <property type="evidence" value="ECO:0007669"/>
    <property type="project" value="InterPro"/>
</dbReference>
<dbReference type="GO" id="GO:0006633">
    <property type="term" value="P:fatty acid biosynthetic process"/>
    <property type="evidence" value="ECO:0007669"/>
    <property type="project" value="InterPro"/>
</dbReference>
<dbReference type="GO" id="GO:0019878">
    <property type="term" value="P:lysine biosynthetic process via aminoadipic acid"/>
    <property type="evidence" value="ECO:0000318"/>
    <property type="project" value="GO_Central"/>
</dbReference>
<dbReference type="GO" id="GO:0051604">
    <property type="term" value="P:protein maturation"/>
    <property type="evidence" value="ECO:0000250"/>
    <property type="project" value="UniProtKB"/>
</dbReference>
<dbReference type="FunFam" id="3.90.470.20:FF:000006">
    <property type="entry name" value="L-aminoadipate-semialdehyde dehydrogenase-phosphopantetheinyl transferase"/>
    <property type="match status" value="1"/>
</dbReference>
<dbReference type="Gene3D" id="3.90.470.20">
    <property type="entry name" value="4'-phosphopantetheinyl transferase domain"/>
    <property type="match status" value="2"/>
</dbReference>
<dbReference type="InterPro" id="IPR008278">
    <property type="entry name" value="4-PPantetheinyl_Trfase_dom"/>
</dbReference>
<dbReference type="InterPro" id="IPR037143">
    <property type="entry name" value="4-PPantetheinyl_Trfase_dom_sf"/>
</dbReference>
<dbReference type="InterPro" id="IPR055066">
    <property type="entry name" value="AASDHPPT_N"/>
</dbReference>
<dbReference type="InterPro" id="IPR050559">
    <property type="entry name" value="P-Pant_transferase_sf"/>
</dbReference>
<dbReference type="InterPro" id="IPR004568">
    <property type="entry name" value="Ppantetheine-prot_Trfase_dom"/>
</dbReference>
<dbReference type="NCBIfam" id="TIGR00556">
    <property type="entry name" value="pantethn_trn"/>
    <property type="match status" value="1"/>
</dbReference>
<dbReference type="PANTHER" id="PTHR12215:SF10">
    <property type="entry name" value="L-AMINOADIPATE-SEMIALDEHYDE DEHYDROGENASE-PHOSPHOPANTETHEINYL TRANSFERASE"/>
    <property type="match status" value="1"/>
</dbReference>
<dbReference type="PANTHER" id="PTHR12215">
    <property type="entry name" value="PHOSPHOPANTETHEINE TRANSFERASE"/>
    <property type="match status" value="1"/>
</dbReference>
<dbReference type="Pfam" id="PF22624">
    <property type="entry name" value="AASDHPPT_N"/>
    <property type="match status" value="1"/>
</dbReference>
<dbReference type="Pfam" id="PF01648">
    <property type="entry name" value="ACPS"/>
    <property type="match status" value="1"/>
</dbReference>
<dbReference type="SUPFAM" id="SSF56214">
    <property type="entry name" value="4'-phosphopantetheinyl transferase"/>
    <property type="match status" value="2"/>
</dbReference>
<reference key="1">
    <citation type="submission" date="2004-06" db="EMBL/GenBank/DDBJ databases">
        <authorList>
            <consortium name="NIH - Xenopus Gene Collection (XGC) project"/>
        </authorList>
    </citation>
    <scope>NUCLEOTIDE SEQUENCE [LARGE SCALE MRNA]</scope>
    <source>
        <tissue>Brain</tissue>
    </source>
</reference>
<organism>
    <name type="scientific">Xenopus laevis</name>
    <name type="common">African clawed frog</name>
    <dbReference type="NCBI Taxonomy" id="8355"/>
    <lineage>
        <taxon>Eukaryota</taxon>
        <taxon>Metazoa</taxon>
        <taxon>Chordata</taxon>
        <taxon>Craniata</taxon>
        <taxon>Vertebrata</taxon>
        <taxon>Euteleostomi</taxon>
        <taxon>Amphibia</taxon>
        <taxon>Batrachia</taxon>
        <taxon>Anura</taxon>
        <taxon>Pipoidea</taxon>
        <taxon>Pipidae</taxon>
        <taxon>Xenopodinae</taxon>
        <taxon>Xenopus</taxon>
        <taxon>Xenopus</taxon>
    </lineage>
</organism>
<protein>
    <recommendedName>
        <fullName>L-aminoadipate-semialdehyde dehydrogenase-phosphopantetheinyl transferase</fullName>
        <ecNumber evidence="1">2.7.8.7</ecNumber>
    </recommendedName>
    <alternativeName>
        <fullName>4'-phosphopantetheinyl transferase</fullName>
    </alternativeName>
    <alternativeName>
        <fullName>Alpha-aminoadipic semialdehyde dehydrogenase-phosphopantetheinyl transferase</fullName>
        <shortName>AASD-PPT</shortName>
    </alternativeName>
</protein>
<keyword id="KW-0963">Cytoplasm</keyword>
<keyword id="KW-0460">Magnesium</keyword>
<keyword id="KW-0479">Metal-binding</keyword>
<keyword id="KW-1185">Reference proteome</keyword>
<keyword id="KW-0808">Transferase</keyword>
<evidence type="ECO:0000250" key="1">
    <source>
        <dbReference type="UniProtKB" id="Q9NRN7"/>
    </source>
</evidence>
<evidence type="ECO:0000305" key="2"/>
<feature type="chain" id="PRO_0000175739" description="L-aminoadipate-semialdehyde dehydrogenase-phosphopantetheinyl transferase">
    <location>
        <begin position="1"/>
        <end position="302"/>
    </location>
</feature>
<feature type="binding site" evidence="1">
    <location>
        <position position="44"/>
    </location>
    <ligand>
        <name>CoA</name>
        <dbReference type="ChEBI" id="CHEBI:57287"/>
    </ligand>
</feature>
<feature type="binding site" evidence="1">
    <location>
        <begin position="83"/>
        <end position="88"/>
    </location>
    <ligand>
        <name>CoA</name>
        <dbReference type="ChEBI" id="CHEBI:57287"/>
    </ligand>
</feature>
<feature type="binding site" evidence="1">
    <location>
        <begin position="105"/>
        <end position="108"/>
    </location>
    <ligand>
        <name>CoA</name>
        <dbReference type="ChEBI" id="CHEBI:57287"/>
    </ligand>
</feature>
<feature type="binding site" evidence="1">
    <location>
        <position position="126"/>
    </location>
    <ligand>
        <name>Mg(2+)</name>
        <dbReference type="ChEBI" id="CHEBI:18420"/>
    </ligand>
</feature>
<feature type="binding site" evidence="1">
    <location>
        <begin position="178"/>
        <end position="182"/>
    </location>
    <ligand>
        <name>CoA</name>
        <dbReference type="ChEBI" id="CHEBI:57287"/>
    </ligand>
</feature>
<feature type="binding site" evidence="1">
    <location>
        <position position="178"/>
    </location>
    <ligand>
        <name>Mg(2+)</name>
        <dbReference type="ChEBI" id="CHEBI:18420"/>
    </ligand>
</feature>